<proteinExistence type="evidence at protein level"/>
<feature type="peptide" id="PRO_0000284706" description="Small basic protein 2" evidence="2">
    <location>
        <begin position="1"/>
        <end position="39"/>
    </location>
</feature>
<feature type="modified residue" description="Pyrrolidone carboxylic acid" evidence="2">
    <location>
        <position position="1"/>
    </location>
</feature>
<feature type="disulfide bond" description="Or C-6 with C-32" evidence="2">
    <location>
        <begin position="6"/>
        <end position="33"/>
    </location>
</feature>
<feature type="disulfide bond" evidence="2">
    <location>
        <begin position="12"/>
        <end position="28"/>
    </location>
</feature>
<feature type="disulfide bond" description="Or C-16 with C-33" evidence="2">
    <location>
        <begin position="16"/>
        <end position="32"/>
    </location>
</feature>
<sequence>QVRKYCPKVGYCSSKCSKADVWSLSSDCKFYCCLPPGWK</sequence>
<reference evidence="3" key="1">
    <citation type="journal article" date="2008" name="Biosci. Biotechnol. Biochem.">
        <title>Structural and physicochemical characteristics of novel basic proteins isolated from duck egg white.</title>
        <authorList>
            <person name="Naknukool S."/>
            <person name="Hayakawa S."/>
            <person name="Sun Y."/>
            <person name="Ogawa M."/>
        </authorList>
    </citation>
    <scope>PROTEIN SEQUENCE</scope>
    <scope>BIOPHYSICOCHEMICAL PROPERTIES</scope>
    <scope>MASS SPECTROMETRY</scope>
    <scope>PYROGLUTAMATE FORMATION AT GLN-1</scope>
    <scope>DISULFIDE BONDS</scope>
    <source>
        <tissue evidence="2">Egg white</tissue>
    </source>
</reference>
<evidence type="ECO:0000255" key="1"/>
<evidence type="ECO:0000269" key="2">
    <source>
    </source>
</evidence>
<evidence type="ECO:0000305" key="3"/>
<name>BPS2_ANAPL</name>
<keyword id="KW-0903">Direct protein sequencing</keyword>
<keyword id="KW-1015">Disulfide bond</keyword>
<keyword id="KW-0873">Pyrrolidone carboxylic acid</keyword>
<keyword id="KW-0964">Secreted</keyword>
<comment type="biophysicochemical properties">
    <temperatureDependence>
        <text evidence="2">Denaturation temperature (Td) is 98.3 degrees Celsius.</text>
    </temperatureDependence>
</comment>
<comment type="subcellular location">
    <subcellularLocation>
        <location evidence="3">Secreted</location>
    </subcellularLocation>
</comment>
<comment type="mass spectrometry"/>
<comment type="similarity">
    <text evidence="1">Belongs to the transferrin family.</text>
</comment>
<protein>
    <recommendedName>
        <fullName>Small basic protein 2</fullName>
    </recommendedName>
    <alternativeName>
        <fullName>Basic protein small 2</fullName>
        <shortName>dBPS2</shortName>
    </alternativeName>
</protein>
<organism>
    <name type="scientific">Anas platyrhynchos</name>
    <name type="common">Mallard</name>
    <name type="synonym">Anas boschas</name>
    <dbReference type="NCBI Taxonomy" id="8839"/>
    <lineage>
        <taxon>Eukaryota</taxon>
        <taxon>Metazoa</taxon>
        <taxon>Chordata</taxon>
        <taxon>Craniata</taxon>
        <taxon>Vertebrata</taxon>
        <taxon>Euteleostomi</taxon>
        <taxon>Archelosauria</taxon>
        <taxon>Archosauria</taxon>
        <taxon>Dinosauria</taxon>
        <taxon>Saurischia</taxon>
        <taxon>Theropoda</taxon>
        <taxon>Coelurosauria</taxon>
        <taxon>Aves</taxon>
        <taxon>Neognathae</taxon>
        <taxon>Galloanserae</taxon>
        <taxon>Anseriformes</taxon>
        <taxon>Anatidae</taxon>
        <taxon>Anatinae</taxon>
        <taxon>Anas</taxon>
    </lineage>
</organism>
<accession>P85124</accession>
<dbReference type="SMR" id="P85124"/>
<dbReference type="HOGENOM" id="CLU_3322207_0_0_1"/>
<dbReference type="Proteomes" id="UP000694400">
    <property type="component" value="Unplaced"/>
</dbReference>
<dbReference type="GO" id="GO:0005576">
    <property type="term" value="C:extracellular region"/>
    <property type="evidence" value="ECO:0007669"/>
    <property type="project" value="UniProtKB-SubCell"/>
</dbReference>
<dbReference type="Gene3D" id="3.10.360.10">
    <property type="entry name" value="Antimicrobial Peptide, Beta-defensin 2, Chain A"/>
    <property type="match status" value="1"/>
</dbReference>
<dbReference type="InterPro" id="IPR012573">
    <property type="entry name" value="Meleagrin/Cygnin"/>
</dbReference>
<dbReference type="Pfam" id="PF08189">
    <property type="entry name" value="Meleagrin"/>
    <property type="match status" value="1"/>
</dbReference>